<comment type="similarity">
    <text evidence="2">Belongs to the PhzF family.</text>
</comment>
<organism>
    <name type="scientific">Deinococcus radiodurans (strain ATCC 13939 / DSM 20539 / JCM 16871 / CCUG 27074 / LMG 4051 / NBRC 15346 / NCIMB 9279 / VKM B-1422 / R1)</name>
    <dbReference type="NCBI Taxonomy" id="243230"/>
    <lineage>
        <taxon>Bacteria</taxon>
        <taxon>Thermotogati</taxon>
        <taxon>Deinococcota</taxon>
        <taxon>Deinococci</taxon>
        <taxon>Deinococcales</taxon>
        <taxon>Deinococcaceae</taxon>
        <taxon>Deinococcus</taxon>
    </lineage>
</organism>
<feature type="chain" id="PRO_0000162396" description="Uncharacterized isomerase DR_1330">
    <location>
        <begin position="1"/>
        <end position="308"/>
    </location>
</feature>
<feature type="active site" evidence="1">
    <location>
        <position position="59"/>
    </location>
</feature>
<dbReference type="EC" id="5.1.-.-"/>
<dbReference type="EMBL" id="AE000513">
    <property type="protein sequence ID" value="AAF10902.1"/>
    <property type="molecule type" value="Genomic_DNA"/>
</dbReference>
<dbReference type="PIR" id="E75409">
    <property type="entry name" value="E75409"/>
</dbReference>
<dbReference type="RefSeq" id="NP_295054.1">
    <property type="nucleotide sequence ID" value="NC_001263.1"/>
</dbReference>
<dbReference type="SMR" id="Q9RUQ2"/>
<dbReference type="FunCoup" id="Q9RUQ2">
    <property type="interactions" value="189"/>
</dbReference>
<dbReference type="STRING" id="243230.DR_1330"/>
<dbReference type="PaxDb" id="243230-DR_1330"/>
<dbReference type="EnsemblBacteria" id="AAF10902">
    <property type="protein sequence ID" value="AAF10902"/>
    <property type="gene ID" value="DR_1330"/>
</dbReference>
<dbReference type="KEGG" id="dra:DR_1330"/>
<dbReference type="PATRIC" id="fig|243230.17.peg.1525"/>
<dbReference type="eggNOG" id="COG0384">
    <property type="taxonomic scope" value="Bacteria"/>
</dbReference>
<dbReference type="HOGENOM" id="CLU_048756_0_2_0"/>
<dbReference type="InParanoid" id="Q9RUQ2"/>
<dbReference type="OrthoDB" id="9788221at2"/>
<dbReference type="Proteomes" id="UP000002524">
    <property type="component" value="Chromosome 1"/>
</dbReference>
<dbReference type="GO" id="GO:0005737">
    <property type="term" value="C:cytoplasm"/>
    <property type="evidence" value="ECO:0000318"/>
    <property type="project" value="GO_Central"/>
</dbReference>
<dbReference type="GO" id="GO:0016853">
    <property type="term" value="F:isomerase activity"/>
    <property type="evidence" value="ECO:0000318"/>
    <property type="project" value="GO_Central"/>
</dbReference>
<dbReference type="GO" id="GO:0009058">
    <property type="term" value="P:biosynthetic process"/>
    <property type="evidence" value="ECO:0007669"/>
    <property type="project" value="InterPro"/>
</dbReference>
<dbReference type="Gene3D" id="3.10.310.10">
    <property type="entry name" value="Diaminopimelate Epimerase, Chain A, domain 1"/>
    <property type="match status" value="2"/>
</dbReference>
<dbReference type="InterPro" id="IPR003719">
    <property type="entry name" value="Phenazine_PhzF-like"/>
</dbReference>
<dbReference type="NCBIfam" id="TIGR00654">
    <property type="entry name" value="PhzF_family"/>
    <property type="match status" value="1"/>
</dbReference>
<dbReference type="PANTHER" id="PTHR13774:SF39">
    <property type="entry name" value="BIOSYNTHESIS PROTEIN, PUTATIVE-RELATED"/>
    <property type="match status" value="1"/>
</dbReference>
<dbReference type="PANTHER" id="PTHR13774">
    <property type="entry name" value="PHENAZINE BIOSYNTHESIS PROTEIN"/>
    <property type="match status" value="1"/>
</dbReference>
<dbReference type="Pfam" id="PF02567">
    <property type="entry name" value="PhzC-PhzF"/>
    <property type="match status" value="1"/>
</dbReference>
<dbReference type="PIRSF" id="PIRSF016184">
    <property type="entry name" value="PhzC_PhzF"/>
    <property type="match status" value="1"/>
</dbReference>
<dbReference type="SUPFAM" id="SSF54506">
    <property type="entry name" value="Diaminopimelate epimerase-like"/>
    <property type="match status" value="1"/>
</dbReference>
<protein>
    <recommendedName>
        <fullName>Uncharacterized isomerase DR_1330</fullName>
        <ecNumber>5.1.-.-</ecNumber>
    </recommendedName>
</protein>
<sequence length="308" mass="32740">MGTEEPARKFYTAPMTRYAEVAAFTTVPGQGNRAGVVLDAGELTGEQMQRLAAFLEAPETVFVTRLSDGLGRVRYFTPTQEVDFCGHATVALGRVLAQAGRWRGEALELETLAGRIPLRLVLDAGGGECRVWMHQPAFGTRAVGRGWHRELAEALGLSDRLLHRGLPLAAASTGLWSVFLPLLDASLLEGLEPDLPRIAELSRELGVVSVYAYAPVGVNRFAARDFAPLVGIPEDPVTGSAGGALLALLASEGRLPLRGNRASGLIYQGHALGTPGEIEVEVEVRGTRVEAVQVGGCAAVEREGVWPG</sequence>
<gene>
    <name type="ordered locus">DR_1330</name>
</gene>
<evidence type="ECO:0000250" key="1"/>
<evidence type="ECO:0000305" key="2"/>
<reference key="1">
    <citation type="journal article" date="1999" name="Science">
        <title>Genome sequence of the radioresistant bacterium Deinococcus radiodurans R1.</title>
        <authorList>
            <person name="White O."/>
            <person name="Eisen J.A."/>
            <person name="Heidelberg J.F."/>
            <person name="Hickey E.K."/>
            <person name="Peterson J.D."/>
            <person name="Dodson R.J."/>
            <person name="Haft D.H."/>
            <person name="Gwinn M.L."/>
            <person name="Nelson W.C."/>
            <person name="Richardson D.L."/>
            <person name="Moffat K.S."/>
            <person name="Qin H."/>
            <person name="Jiang L."/>
            <person name="Pamphile W."/>
            <person name="Crosby M."/>
            <person name="Shen M."/>
            <person name="Vamathevan J.J."/>
            <person name="Lam P."/>
            <person name="McDonald L.A."/>
            <person name="Utterback T.R."/>
            <person name="Zalewski C."/>
            <person name="Makarova K.S."/>
            <person name="Aravind L."/>
            <person name="Daly M.J."/>
            <person name="Minton K.W."/>
            <person name="Fleischmann R.D."/>
            <person name="Ketchum K.A."/>
            <person name="Nelson K.E."/>
            <person name="Salzberg S.L."/>
            <person name="Smith H.O."/>
            <person name="Venter J.C."/>
            <person name="Fraser C.M."/>
        </authorList>
    </citation>
    <scope>NUCLEOTIDE SEQUENCE [LARGE SCALE GENOMIC DNA]</scope>
    <source>
        <strain>ATCC 13939 / DSM 20539 / JCM 16871 / CCUG 27074 / LMG 4051 / NBRC 15346 / NCIMB 9279 / VKM B-1422 / R1</strain>
    </source>
</reference>
<name>Y1330_DEIRA</name>
<proteinExistence type="inferred from homology"/>
<accession>Q9RUQ2</accession>
<keyword id="KW-0413">Isomerase</keyword>
<keyword id="KW-1185">Reference proteome</keyword>